<name>WHIA_SALAI</name>
<reference key="1">
    <citation type="submission" date="2007-10" db="EMBL/GenBank/DDBJ databases">
        <title>Complete sequence of Salinispora arenicola CNS-205.</title>
        <authorList>
            <consortium name="US DOE Joint Genome Institute"/>
            <person name="Copeland A."/>
            <person name="Lucas S."/>
            <person name="Lapidus A."/>
            <person name="Barry K."/>
            <person name="Glavina del Rio T."/>
            <person name="Dalin E."/>
            <person name="Tice H."/>
            <person name="Pitluck S."/>
            <person name="Foster B."/>
            <person name="Schmutz J."/>
            <person name="Larimer F."/>
            <person name="Land M."/>
            <person name="Hauser L."/>
            <person name="Kyrpides N."/>
            <person name="Ivanova N."/>
            <person name="Jensen P.R."/>
            <person name="Moore B.S."/>
            <person name="Penn K."/>
            <person name="Jenkins C."/>
            <person name="Udwary D."/>
            <person name="Xiang L."/>
            <person name="Gontang E."/>
            <person name="Richardson P."/>
        </authorList>
    </citation>
    <scope>NUCLEOTIDE SEQUENCE [LARGE SCALE GENOMIC DNA]</scope>
    <source>
        <strain>CNS-205</strain>
    </source>
</reference>
<accession>A8LW20</accession>
<keyword id="KW-0131">Cell cycle</keyword>
<keyword id="KW-0132">Cell division</keyword>
<keyword id="KW-0238">DNA-binding</keyword>
<comment type="function">
    <text evidence="1">Involved in cell division and chromosome segregation.</text>
</comment>
<comment type="similarity">
    <text evidence="1">Belongs to the WhiA family.</text>
</comment>
<gene>
    <name evidence="1" type="primary">whiA</name>
    <name type="ordered locus">Sare_3326</name>
</gene>
<organism>
    <name type="scientific">Salinispora arenicola (strain CNS-205)</name>
    <dbReference type="NCBI Taxonomy" id="391037"/>
    <lineage>
        <taxon>Bacteria</taxon>
        <taxon>Bacillati</taxon>
        <taxon>Actinomycetota</taxon>
        <taxon>Actinomycetes</taxon>
        <taxon>Micromonosporales</taxon>
        <taxon>Micromonosporaceae</taxon>
        <taxon>Salinispora</taxon>
    </lineage>
</organism>
<proteinExistence type="inferred from homology"/>
<evidence type="ECO:0000255" key="1">
    <source>
        <dbReference type="HAMAP-Rule" id="MF_01420"/>
    </source>
</evidence>
<protein>
    <recommendedName>
        <fullName evidence="1">Probable cell division protein WhiA</fullName>
    </recommendedName>
</protein>
<sequence length="326" mass="34897">MAMTAAVKDELSRVDVPKPCCRRAEMAALLRFAGGLHIVSGRVVVEAELDTGAVARRLRREIAEVYGYPSEIHVLASGGLRKGSHFIVRVVKDGEFLARQTGLLDVRGRPVRGLPPHVVAANVCCAVSAWRGAFMAHGSLTEPGRSSALEITCPGPESALALVGAARRIGIAAKNREVRGVDRVVVKDGDAIAALLTRIGAHASVLAWEERRVRREVRATANRLANFDDANLRRSARAAVAAAARVTRALEILADDAPHHLTSAGRLRLEHRQASLEELGALADPPLTKDAIAGRIRRLLALADKRARDLGIPDTEAAVTPDMLVV</sequence>
<dbReference type="EMBL" id="CP000850">
    <property type="protein sequence ID" value="ABV99129.1"/>
    <property type="molecule type" value="Genomic_DNA"/>
</dbReference>
<dbReference type="SMR" id="A8LW20"/>
<dbReference type="STRING" id="391037.Sare_3326"/>
<dbReference type="KEGG" id="saq:Sare_3326"/>
<dbReference type="PATRIC" id="fig|391037.6.peg.3356"/>
<dbReference type="eggNOG" id="COG1481">
    <property type="taxonomic scope" value="Bacteria"/>
</dbReference>
<dbReference type="HOGENOM" id="CLU_053282_0_0_11"/>
<dbReference type="OrthoDB" id="5197218at2"/>
<dbReference type="GO" id="GO:0003677">
    <property type="term" value="F:DNA binding"/>
    <property type="evidence" value="ECO:0007669"/>
    <property type="project" value="UniProtKB-UniRule"/>
</dbReference>
<dbReference type="GO" id="GO:0051301">
    <property type="term" value="P:cell division"/>
    <property type="evidence" value="ECO:0007669"/>
    <property type="project" value="UniProtKB-UniRule"/>
</dbReference>
<dbReference type="GO" id="GO:0043937">
    <property type="term" value="P:regulation of sporulation"/>
    <property type="evidence" value="ECO:0007669"/>
    <property type="project" value="InterPro"/>
</dbReference>
<dbReference type="FunFam" id="3.10.28.10:FF:000001">
    <property type="entry name" value="Probable cell division protein WhiA"/>
    <property type="match status" value="1"/>
</dbReference>
<dbReference type="Gene3D" id="3.10.28.10">
    <property type="entry name" value="Homing endonucleases"/>
    <property type="match status" value="1"/>
</dbReference>
<dbReference type="HAMAP" id="MF_01420">
    <property type="entry name" value="HTH_type_WhiA"/>
    <property type="match status" value="1"/>
</dbReference>
<dbReference type="InterPro" id="IPR027434">
    <property type="entry name" value="Homing_endonucl"/>
</dbReference>
<dbReference type="InterPro" id="IPR018478">
    <property type="entry name" value="Sporu_reg_WhiA_N_dom"/>
</dbReference>
<dbReference type="InterPro" id="IPR003802">
    <property type="entry name" value="Sporulation_regulator_WhiA"/>
</dbReference>
<dbReference type="InterPro" id="IPR023054">
    <property type="entry name" value="Sporulation_regulator_WhiA_C"/>
</dbReference>
<dbReference type="InterPro" id="IPR039518">
    <property type="entry name" value="WhiA_LAGLIDADG_dom"/>
</dbReference>
<dbReference type="NCBIfam" id="TIGR00647">
    <property type="entry name" value="DNA_bind_WhiA"/>
    <property type="match status" value="1"/>
</dbReference>
<dbReference type="PANTHER" id="PTHR37307">
    <property type="entry name" value="CELL DIVISION PROTEIN WHIA-RELATED"/>
    <property type="match status" value="1"/>
</dbReference>
<dbReference type="PANTHER" id="PTHR37307:SF1">
    <property type="entry name" value="CELL DIVISION PROTEIN WHIA-RELATED"/>
    <property type="match status" value="1"/>
</dbReference>
<dbReference type="Pfam" id="PF02650">
    <property type="entry name" value="HTH_WhiA"/>
    <property type="match status" value="1"/>
</dbReference>
<dbReference type="Pfam" id="PF14527">
    <property type="entry name" value="LAGLIDADG_WhiA"/>
    <property type="match status" value="1"/>
</dbReference>
<dbReference type="Pfam" id="PF10298">
    <property type="entry name" value="WhiA_N"/>
    <property type="match status" value="1"/>
</dbReference>
<feature type="chain" id="PRO_0000376549" description="Probable cell division protein WhiA">
    <location>
        <begin position="1"/>
        <end position="326"/>
    </location>
</feature>
<feature type="DNA-binding region" description="H-T-H motif" evidence="1">
    <location>
        <begin position="275"/>
        <end position="308"/>
    </location>
</feature>